<keyword id="KW-0328">Glycosyltransferase</keyword>
<keyword id="KW-0460">Magnesium</keyword>
<keyword id="KW-0665">Pyrimidine biosynthesis</keyword>
<keyword id="KW-0808">Transferase</keyword>
<comment type="function">
    <text evidence="1">Catalyzes the transfer of a ribosyl phosphate group from 5-phosphoribose 1-diphosphate to orotate, leading to the formation of orotidine monophosphate (OMP).</text>
</comment>
<comment type="catalytic activity">
    <reaction evidence="1">
        <text>orotidine 5'-phosphate + diphosphate = orotate + 5-phospho-alpha-D-ribose 1-diphosphate</text>
        <dbReference type="Rhea" id="RHEA:10380"/>
        <dbReference type="ChEBI" id="CHEBI:30839"/>
        <dbReference type="ChEBI" id="CHEBI:33019"/>
        <dbReference type="ChEBI" id="CHEBI:57538"/>
        <dbReference type="ChEBI" id="CHEBI:58017"/>
        <dbReference type="EC" id="2.4.2.10"/>
    </reaction>
</comment>
<comment type="cofactor">
    <cofactor evidence="1">
        <name>Mg(2+)</name>
        <dbReference type="ChEBI" id="CHEBI:18420"/>
    </cofactor>
</comment>
<comment type="pathway">
    <text evidence="1">Pyrimidine metabolism; UMP biosynthesis via de novo pathway; UMP from orotate: step 1/2.</text>
</comment>
<comment type="subunit">
    <text evidence="1">Homodimer.</text>
</comment>
<comment type="similarity">
    <text evidence="1">Belongs to the purine/pyrimidine phosphoribosyltransferase family. PyrE subfamily.</text>
</comment>
<reference key="1">
    <citation type="submission" date="2008-05" db="EMBL/GenBank/DDBJ databases">
        <title>Genome sequence of Helicobacter pylori from the remote Amazon: traces of Asian ancestry of the first Americans.</title>
        <authorList>
            <person name="Kersulyte D."/>
            <person name="Kalia A."/>
            <person name="Gilman R.H."/>
            <person name="Berg D.E."/>
        </authorList>
    </citation>
    <scope>NUCLEOTIDE SEQUENCE [LARGE SCALE GENOMIC DNA]</scope>
    <source>
        <strain>Shi470</strain>
    </source>
</reference>
<sequence length="201" mass="21979">MDIKACYQNAKALLEGHFLLSSGFHSNYYLQSAKVLEDPKLAEQLAKELAKQIQEAHLNIECVCSPAIGGILAGYELARALGVRFIFTERVDNTMALRRGFEVKKNEKILVCEDIITTGKSAMECAKVLEEKGAQIVAFGALANRGICKRVHSHLKAQEGACLPSHLPLFALEDFVFDMHKPSSCPLCTTSTAIKPGSRGN</sequence>
<evidence type="ECO:0000255" key="1">
    <source>
        <dbReference type="HAMAP-Rule" id="MF_01208"/>
    </source>
</evidence>
<feature type="chain" id="PRO_1000138798" description="Orotate phosphoribosyltransferase">
    <location>
        <begin position="1"/>
        <end position="201"/>
    </location>
</feature>
<feature type="binding site" evidence="1">
    <location>
        <begin position="113"/>
        <end position="121"/>
    </location>
    <ligand>
        <name>5-phospho-alpha-D-ribose 1-diphosphate</name>
        <dbReference type="ChEBI" id="CHEBI:58017"/>
    </ligand>
</feature>
<feature type="binding site" evidence="1">
    <location>
        <position position="117"/>
    </location>
    <ligand>
        <name>orotate</name>
        <dbReference type="ChEBI" id="CHEBI:30839"/>
    </ligand>
</feature>
<feature type="binding site" evidence="1">
    <location>
        <position position="145"/>
    </location>
    <ligand>
        <name>orotate</name>
        <dbReference type="ChEBI" id="CHEBI:30839"/>
    </ligand>
</feature>
<protein>
    <recommendedName>
        <fullName evidence="1">Orotate phosphoribosyltransferase</fullName>
        <shortName evidence="1">OPRT</shortName>
        <shortName evidence="1">OPRTase</shortName>
        <ecNumber evidence="1">2.4.2.10</ecNumber>
    </recommendedName>
</protein>
<organism>
    <name type="scientific">Helicobacter pylori (strain Shi470)</name>
    <dbReference type="NCBI Taxonomy" id="512562"/>
    <lineage>
        <taxon>Bacteria</taxon>
        <taxon>Pseudomonadati</taxon>
        <taxon>Campylobacterota</taxon>
        <taxon>Epsilonproteobacteria</taxon>
        <taxon>Campylobacterales</taxon>
        <taxon>Helicobacteraceae</taxon>
        <taxon>Helicobacter</taxon>
    </lineage>
</organism>
<name>PYRE_HELPS</name>
<proteinExistence type="inferred from homology"/>
<gene>
    <name evidence="1" type="primary">pyrE</name>
    <name type="ordered locus">HPSH_06515</name>
</gene>
<dbReference type="EC" id="2.4.2.10" evidence="1"/>
<dbReference type="EMBL" id="CP001072">
    <property type="protein sequence ID" value="ACD48703.1"/>
    <property type="molecule type" value="Genomic_DNA"/>
</dbReference>
<dbReference type="RefSeq" id="WP_000351541.1">
    <property type="nucleotide sequence ID" value="NC_010698.2"/>
</dbReference>
<dbReference type="SMR" id="B2UV21"/>
<dbReference type="KEGG" id="hps:HPSH_06515"/>
<dbReference type="HOGENOM" id="CLU_074878_3_0_7"/>
<dbReference type="UniPathway" id="UPA00070">
    <property type="reaction ID" value="UER00119"/>
</dbReference>
<dbReference type="GO" id="GO:0000287">
    <property type="term" value="F:magnesium ion binding"/>
    <property type="evidence" value="ECO:0007669"/>
    <property type="project" value="UniProtKB-UniRule"/>
</dbReference>
<dbReference type="GO" id="GO:0004588">
    <property type="term" value="F:orotate phosphoribosyltransferase activity"/>
    <property type="evidence" value="ECO:0007669"/>
    <property type="project" value="UniProtKB-UniRule"/>
</dbReference>
<dbReference type="GO" id="GO:0044205">
    <property type="term" value="P:'de novo' UMP biosynthetic process"/>
    <property type="evidence" value="ECO:0007669"/>
    <property type="project" value="UniProtKB-UniRule"/>
</dbReference>
<dbReference type="GO" id="GO:0019856">
    <property type="term" value="P:pyrimidine nucleobase biosynthetic process"/>
    <property type="evidence" value="ECO:0007669"/>
    <property type="project" value="InterPro"/>
</dbReference>
<dbReference type="CDD" id="cd06223">
    <property type="entry name" value="PRTases_typeI"/>
    <property type="match status" value="1"/>
</dbReference>
<dbReference type="Gene3D" id="3.40.50.2020">
    <property type="match status" value="1"/>
</dbReference>
<dbReference type="HAMAP" id="MF_01208">
    <property type="entry name" value="PyrE"/>
    <property type="match status" value="1"/>
</dbReference>
<dbReference type="InterPro" id="IPR023031">
    <property type="entry name" value="OPRT"/>
</dbReference>
<dbReference type="InterPro" id="IPR006273">
    <property type="entry name" value="Orotate_PRibTrfase_bac"/>
</dbReference>
<dbReference type="InterPro" id="IPR000836">
    <property type="entry name" value="PRibTrfase_dom"/>
</dbReference>
<dbReference type="InterPro" id="IPR029057">
    <property type="entry name" value="PRTase-like"/>
</dbReference>
<dbReference type="NCBIfam" id="TIGR01367">
    <property type="entry name" value="pyrE_Therm"/>
    <property type="match status" value="1"/>
</dbReference>
<dbReference type="PANTHER" id="PTHR19278">
    <property type="entry name" value="OROTATE PHOSPHORIBOSYLTRANSFERASE"/>
    <property type="match status" value="1"/>
</dbReference>
<dbReference type="PANTHER" id="PTHR19278:SF9">
    <property type="entry name" value="URIDINE 5'-MONOPHOSPHATE SYNTHASE"/>
    <property type="match status" value="1"/>
</dbReference>
<dbReference type="Pfam" id="PF00156">
    <property type="entry name" value="Pribosyltran"/>
    <property type="match status" value="1"/>
</dbReference>
<dbReference type="SUPFAM" id="SSF53271">
    <property type="entry name" value="PRTase-like"/>
    <property type="match status" value="1"/>
</dbReference>
<dbReference type="PROSITE" id="PS00103">
    <property type="entry name" value="PUR_PYR_PR_TRANSFER"/>
    <property type="match status" value="1"/>
</dbReference>
<accession>B2UV21</accession>